<sequence length="212" mass="22694">MSQEHQDVKTGTTTVGIVFDGGVILATERRATMGNLIASKKAKKVHAITDKIGMTIAGGVGDAQQLVRIINVECNLYEIRRGQKISVGAAATILSNYLNQNRFSPYYVQLLVGGVDTSGPSVYSVDAAGGATLEENFVSTGSGSLTAYGVLEDRFKPNMTEEEAIELAVRALRAAMLRDSASGEGYNVVIITQEKFEYLPEDKIAGYLPPAK</sequence>
<feature type="propeptide" id="PRO_0000397356" description="Removed in mature form; by autocatalysis" evidence="1">
    <location>
        <begin position="1"/>
        <end position="11"/>
    </location>
</feature>
<feature type="chain" id="PRO_0000397357" description="Proteasome subunit beta">
    <location>
        <begin position="12"/>
        <end position="212"/>
    </location>
</feature>
<feature type="active site" description="Nucleophile" evidence="1">
    <location>
        <position position="12"/>
    </location>
</feature>
<protein>
    <recommendedName>
        <fullName evidence="1">Proteasome subunit beta</fullName>
        <ecNumber evidence="1">3.4.25.1</ecNumber>
    </recommendedName>
    <alternativeName>
        <fullName evidence="1">20S proteasome beta subunit</fullName>
    </alternativeName>
    <alternativeName>
        <fullName evidence="1">Proteasome core protein PsmB</fullName>
    </alternativeName>
</protein>
<name>PSB_METLZ</name>
<accession>A2SS78</accession>
<organism>
    <name type="scientific">Methanocorpusculum labreanum (strain ATCC 43576 / DSM 4855 / Z)</name>
    <dbReference type="NCBI Taxonomy" id="410358"/>
    <lineage>
        <taxon>Archaea</taxon>
        <taxon>Methanobacteriati</taxon>
        <taxon>Methanobacteriota</taxon>
        <taxon>Stenosarchaea group</taxon>
        <taxon>Methanomicrobia</taxon>
        <taxon>Methanomicrobiales</taxon>
        <taxon>Methanocorpusculaceae</taxon>
        <taxon>Methanocorpusculum</taxon>
    </lineage>
</organism>
<comment type="function">
    <text evidence="1">Component of the proteasome core, a large protease complex with broad specificity involved in protein degradation.</text>
</comment>
<comment type="catalytic activity">
    <reaction evidence="1">
        <text>Cleavage of peptide bonds with very broad specificity.</text>
        <dbReference type="EC" id="3.4.25.1"/>
    </reaction>
</comment>
<comment type="activity regulation">
    <text evidence="1">The formation of the proteasomal ATPase PAN-20S proteasome complex, via the docking of the C-termini of PAN into the intersubunit pockets in the alpha-rings, triggers opening of the gate for substrate entry. Interconversion between the open-gate and close-gate conformations leads to a dynamic regulation of the 20S proteasome proteolysis activity.</text>
</comment>
<comment type="subunit">
    <text evidence="1">The 20S proteasome core is composed of 14 alpha and 14 beta subunits that assemble into four stacked heptameric rings, resulting in a barrel-shaped structure. The two inner rings, each composed of seven catalytic beta subunits, are sandwiched by two outer rings, each composed of seven alpha subunits. The catalytic chamber with the active sites is on the inside of the barrel. Has a gated structure, the ends of the cylinder being occluded by the N-termini of the alpha-subunits. Is capped at one or both ends by the proteasome regulatory ATPase, PAN.</text>
</comment>
<comment type="subcellular location">
    <subcellularLocation>
        <location evidence="1">Cytoplasm</location>
    </subcellularLocation>
</comment>
<comment type="similarity">
    <text evidence="1">Belongs to the peptidase T1B family.</text>
</comment>
<gene>
    <name evidence="1" type="primary">psmB</name>
    <name type="ordered locus">Mlab_1015</name>
</gene>
<reference key="1">
    <citation type="journal article" date="2009" name="Stand. Genomic Sci.">
        <title>Complete genome sequence of Methanocorpusculum labreanum type strain Z.</title>
        <authorList>
            <person name="Anderson I.J."/>
            <person name="Sieprawska-Lupa M."/>
            <person name="Goltsman E."/>
            <person name="Lapidus A."/>
            <person name="Copeland A."/>
            <person name="Glavina Del Rio T."/>
            <person name="Tice H."/>
            <person name="Dalin E."/>
            <person name="Barry K."/>
            <person name="Pitluck S."/>
            <person name="Hauser L."/>
            <person name="Land M."/>
            <person name="Lucas S."/>
            <person name="Richardson P."/>
            <person name="Whitman W.B."/>
            <person name="Kyrpides N.C."/>
        </authorList>
    </citation>
    <scope>NUCLEOTIDE SEQUENCE [LARGE SCALE GENOMIC DNA]</scope>
    <source>
        <strain>ATCC 43576 / DSM 4855 / Z</strain>
    </source>
</reference>
<proteinExistence type="inferred from homology"/>
<evidence type="ECO:0000255" key="1">
    <source>
        <dbReference type="HAMAP-Rule" id="MF_02113"/>
    </source>
</evidence>
<dbReference type="EC" id="3.4.25.1" evidence="1"/>
<dbReference type="EMBL" id="CP000559">
    <property type="protein sequence ID" value="ABN07184.1"/>
    <property type="molecule type" value="Genomic_DNA"/>
</dbReference>
<dbReference type="RefSeq" id="WP_011833387.1">
    <property type="nucleotide sequence ID" value="NC_008942.1"/>
</dbReference>
<dbReference type="SMR" id="A2SS78"/>
<dbReference type="STRING" id="410358.Mlab_1015"/>
<dbReference type="MEROPS" id="T01.002"/>
<dbReference type="GeneID" id="4794522"/>
<dbReference type="KEGG" id="mla:Mlab_1015"/>
<dbReference type="eggNOG" id="arCOG00970">
    <property type="taxonomic scope" value="Archaea"/>
</dbReference>
<dbReference type="HOGENOM" id="CLU_035750_7_2_2"/>
<dbReference type="OrthoDB" id="6330at2157"/>
<dbReference type="Proteomes" id="UP000000365">
    <property type="component" value="Chromosome"/>
</dbReference>
<dbReference type="GO" id="GO:0005737">
    <property type="term" value="C:cytoplasm"/>
    <property type="evidence" value="ECO:0007669"/>
    <property type="project" value="UniProtKB-SubCell"/>
</dbReference>
<dbReference type="GO" id="GO:0019774">
    <property type="term" value="C:proteasome core complex, beta-subunit complex"/>
    <property type="evidence" value="ECO:0007669"/>
    <property type="project" value="UniProtKB-UniRule"/>
</dbReference>
<dbReference type="GO" id="GO:0004298">
    <property type="term" value="F:threonine-type endopeptidase activity"/>
    <property type="evidence" value="ECO:0007669"/>
    <property type="project" value="UniProtKB-UniRule"/>
</dbReference>
<dbReference type="GO" id="GO:0010498">
    <property type="term" value="P:proteasomal protein catabolic process"/>
    <property type="evidence" value="ECO:0007669"/>
    <property type="project" value="UniProtKB-UniRule"/>
</dbReference>
<dbReference type="CDD" id="cd03764">
    <property type="entry name" value="proteasome_beta_archeal"/>
    <property type="match status" value="1"/>
</dbReference>
<dbReference type="FunFam" id="3.60.20.10:FF:000049">
    <property type="entry name" value="Proteasome subunit beta"/>
    <property type="match status" value="1"/>
</dbReference>
<dbReference type="Gene3D" id="3.60.20.10">
    <property type="entry name" value="Glutamine Phosphoribosylpyrophosphate, subunit 1, domain 1"/>
    <property type="match status" value="1"/>
</dbReference>
<dbReference type="HAMAP" id="MF_02113_A">
    <property type="entry name" value="Proteasome_B_A"/>
    <property type="match status" value="1"/>
</dbReference>
<dbReference type="InterPro" id="IPR029055">
    <property type="entry name" value="Ntn_hydrolases_N"/>
</dbReference>
<dbReference type="InterPro" id="IPR019983">
    <property type="entry name" value="Pept_T1A_Psome_bsu_arc"/>
</dbReference>
<dbReference type="InterPro" id="IPR000243">
    <property type="entry name" value="Pept_T1A_subB"/>
</dbReference>
<dbReference type="InterPro" id="IPR016050">
    <property type="entry name" value="Proteasome_bsu_CS"/>
</dbReference>
<dbReference type="InterPro" id="IPR001353">
    <property type="entry name" value="Proteasome_sua/b"/>
</dbReference>
<dbReference type="InterPro" id="IPR023333">
    <property type="entry name" value="Proteasome_suB-type"/>
</dbReference>
<dbReference type="NCBIfam" id="TIGR03634">
    <property type="entry name" value="arc_protsome_B"/>
    <property type="match status" value="1"/>
</dbReference>
<dbReference type="PANTHER" id="PTHR32194:SF0">
    <property type="entry name" value="ATP-DEPENDENT PROTEASE SUBUNIT HSLV"/>
    <property type="match status" value="1"/>
</dbReference>
<dbReference type="PANTHER" id="PTHR32194">
    <property type="entry name" value="METALLOPROTEASE TLDD"/>
    <property type="match status" value="1"/>
</dbReference>
<dbReference type="Pfam" id="PF00227">
    <property type="entry name" value="Proteasome"/>
    <property type="match status" value="1"/>
</dbReference>
<dbReference type="PRINTS" id="PR00141">
    <property type="entry name" value="PROTEASOME"/>
</dbReference>
<dbReference type="SUPFAM" id="SSF56235">
    <property type="entry name" value="N-terminal nucleophile aminohydrolases (Ntn hydrolases)"/>
    <property type="match status" value="1"/>
</dbReference>
<dbReference type="PROSITE" id="PS00854">
    <property type="entry name" value="PROTEASOME_BETA_1"/>
    <property type="match status" value="1"/>
</dbReference>
<dbReference type="PROSITE" id="PS51476">
    <property type="entry name" value="PROTEASOME_BETA_2"/>
    <property type="match status" value="1"/>
</dbReference>
<keyword id="KW-0068">Autocatalytic cleavage</keyword>
<keyword id="KW-0963">Cytoplasm</keyword>
<keyword id="KW-0378">Hydrolase</keyword>
<keyword id="KW-0645">Protease</keyword>
<keyword id="KW-0647">Proteasome</keyword>
<keyword id="KW-1185">Reference proteome</keyword>
<keyword id="KW-0888">Threonine protease</keyword>
<keyword id="KW-0865">Zymogen</keyword>